<comment type="function">
    <text evidence="1">Endonuclease that resolves Holliday junction intermediates in genetic recombination. Cleaves mobile four-strand junctions by introducing symmetrical nicks in paired strands. Promotes annealing of linear ssDNA with homologous dsDNA. Required for DNA repair, homologous recombination and chromosome segregation.</text>
</comment>
<comment type="catalytic activity">
    <reaction evidence="1">
        <text>Endonucleolytic cleavage at a junction such as a reciprocal single-stranded crossover between two homologous DNA duplexes (Holliday junction).</text>
        <dbReference type="EC" id="3.1.21.10"/>
    </reaction>
</comment>
<comment type="cofactor">
    <cofactor evidence="1">
        <name>Mg(2+)</name>
        <dbReference type="ChEBI" id="CHEBI:18420"/>
    </cofactor>
    <text evidence="1">Binds 1 Mg(2+) ion per subunit.</text>
</comment>
<comment type="subcellular location">
    <subcellularLocation>
        <location evidence="1">Cytoplasm</location>
    </subcellularLocation>
</comment>
<comment type="similarity">
    <text evidence="1">Belongs to the RecU family.</text>
</comment>
<evidence type="ECO:0000255" key="1">
    <source>
        <dbReference type="HAMAP-Rule" id="MF_00130"/>
    </source>
</evidence>
<accession>Q1JAI0</accession>
<organism>
    <name type="scientific">Streptococcus pyogenes serotype M12 (strain MGAS2096)</name>
    <dbReference type="NCBI Taxonomy" id="370553"/>
    <lineage>
        <taxon>Bacteria</taxon>
        <taxon>Bacillati</taxon>
        <taxon>Bacillota</taxon>
        <taxon>Bacilli</taxon>
        <taxon>Lactobacillales</taxon>
        <taxon>Streptococcaceae</taxon>
        <taxon>Streptococcus</taxon>
    </lineage>
</organism>
<gene>
    <name evidence="1" type="primary">recU</name>
    <name type="ordered locus">MGAS2096_Spy1376</name>
</gene>
<sequence>MVNYPHNLIRQKVSSVQKQTKQNKVDFANRGMSFEAAINATNDYYLSRQIAVIHKKPTPVQIVKVDYPKRSRAKIVEAYFRQASTTDYCGVYKGHYVDFEAKETRQKTAMPMKNFHLHQIEHMACVLHQKGICFVLLHFSTLKETYYLPAQALISFYQIDNGSKSMPIDYIRKNGFKVAFGAFPQVPYLNIIEQNFLGGDYN</sequence>
<dbReference type="EC" id="3.1.21.10" evidence="1"/>
<dbReference type="EMBL" id="CP000261">
    <property type="protein sequence ID" value="ABF36428.1"/>
    <property type="molecule type" value="Genomic_DNA"/>
</dbReference>
<dbReference type="SMR" id="Q1JAI0"/>
<dbReference type="KEGG" id="spj:MGAS2096_Spy1376"/>
<dbReference type="HOGENOM" id="CLU_096340_0_0_9"/>
<dbReference type="GO" id="GO:0005737">
    <property type="term" value="C:cytoplasm"/>
    <property type="evidence" value="ECO:0007669"/>
    <property type="project" value="UniProtKB-SubCell"/>
</dbReference>
<dbReference type="GO" id="GO:0004519">
    <property type="term" value="F:endonuclease activity"/>
    <property type="evidence" value="ECO:0007669"/>
    <property type="project" value="UniProtKB-UniRule"/>
</dbReference>
<dbReference type="GO" id="GO:0000287">
    <property type="term" value="F:magnesium ion binding"/>
    <property type="evidence" value="ECO:0007669"/>
    <property type="project" value="UniProtKB-UniRule"/>
</dbReference>
<dbReference type="GO" id="GO:0003676">
    <property type="term" value="F:nucleic acid binding"/>
    <property type="evidence" value="ECO:0007669"/>
    <property type="project" value="InterPro"/>
</dbReference>
<dbReference type="GO" id="GO:0007059">
    <property type="term" value="P:chromosome segregation"/>
    <property type="evidence" value="ECO:0007669"/>
    <property type="project" value="UniProtKB-UniRule"/>
</dbReference>
<dbReference type="GO" id="GO:0006310">
    <property type="term" value="P:DNA recombination"/>
    <property type="evidence" value="ECO:0007669"/>
    <property type="project" value="UniProtKB-UniRule"/>
</dbReference>
<dbReference type="GO" id="GO:0006281">
    <property type="term" value="P:DNA repair"/>
    <property type="evidence" value="ECO:0007669"/>
    <property type="project" value="UniProtKB-UniRule"/>
</dbReference>
<dbReference type="CDD" id="cd22354">
    <property type="entry name" value="RecU-like"/>
    <property type="match status" value="1"/>
</dbReference>
<dbReference type="Gene3D" id="3.40.1350.10">
    <property type="match status" value="1"/>
</dbReference>
<dbReference type="HAMAP" id="MF_00130">
    <property type="entry name" value="RecU"/>
    <property type="match status" value="1"/>
</dbReference>
<dbReference type="InterPro" id="IPR004612">
    <property type="entry name" value="Resolv_RecU"/>
</dbReference>
<dbReference type="InterPro" id="IPR011335">
    <property type="entry name" value="Restrct_endonuc-II-like"/>
</dbReference>
<dbReference type="InterPro" id="IPR011856">
    <property type="entry name" value="tRNA_endonuc-like_dom_sf"/>
</dbReference>
<dbReference type="NCBIfam" id="NF002580">
    <property type="entry name" value="PRK02234.1-1"/>
    <property type="match status" value="1"/>
</dbReference>
<dbReference type="NCBIfam" id="NF002584">
    <property type="entry name" value="PRK02234.1-5"/>
    <property type="match status" value="1"/>
</dbReference>
<dbReference type="NCBIfam" id="TIGR00648">
    <property type="entry name" value="recU"/>
    <property type="match status" value="1"/>
</dbReference>
<dbReference type="Pfam" id="PF03838">
    <property type="entry name" value="RecU"/>
    <property type="match status" value="1"/>
</dbReference>
<dbReference type="PIRSF" id="PIRSF037785">
    <property type="entry name" value="RecU"/>
    <property type="match status" value="1"/>
</dbReference>
<dbReference type="SUPFAM" id="SSF52980">
    <property type="entry name" value="Restriction endonuclease-like"/>
    <property type="match status" value="1"/>
</dbReference>
<feature type="chain" id="PRO_1000016748" description="Holliday junction resolvase RecU">
    <location>
        <begin position="1"/>
        <end position="202"/>
    </location>
</feature>
<feature type="binding site" evidence="1">
    <location>
        <position position="85"/>
    </location>
    <ligand>
        <name>Mg(2+)</name>
        <dbReference type="ChEBI" id="CHEBI:18420"/>
    </ligand>
</feature>
<feature type="binding site" evidence="1">
    <location>
        <position position="87"/>
    </location>
    <ligand>
        <name>Mg(2+)</name>
        <dbReference type="ChEBI" id="CHEBI:18420"/>
    </ligand>
</feature>
<feature type="binding site" evidence="1">
    <location>
        <position position="100"/>
    </location>
    <ligand>
        <name>Mg(2+)</name>
        <dbReference type="ChEBI" id="CHEBI:18420"/>
    </ligand>
</feature>
<feature type="binding site" evidence="1">
    <location>
        <position position="119"/>
    </location>
    <ligand>
        <name>Mg(2+)</name>
        <dbReference type="ChEBI" id="CHEBI:18420"/>
    </ligand>
</feature>
<feature type="site" description="Transition state stabilizer" evidence="1">
    <location>
        <position position="102"/>
    </location>
</feature>
<proteinExistence type="inferred from homology"/>
<keyword id="KW-0963">Cytoplasm</keyword>
<keyword id="KW-0227">DNA damage</keyword>
<keyword id="KW-0233">DNA recombination</keyword>
<keyword id="KW-0234">DNA repair</keyword>
<keyword id="KW-0255">Endonuclease</keyword>
<keyword id="KW-0378">Hydrolase</keyword>
<keyword id="KW-0460">Magnesium</keyword>
<keyword id="KW-0479">Metal-binding</keyword>
<keyword id="KW-0540">Nuclease</keyword>
<protein>
    <recommendedName>
        <fullName evidence="1">Holliday junction resolvase RecU</fullName>
        <ecNumber evidence="1">3.1.21.10</ecNumber>
    </recommendedName>
    <alternativeName>
        <fullName evidence="1">Recombination protein U homolog</fullName>
    </alternativeName>
</protein>
<reference key="1">
    <citation type="journal article" date="2006" name="Proc. Natl. Acad. Sci. U.S.A.">
        <title>Molecular genetic anatomy of inter- and intraserotype variation in the human bacterial pathogen group A Streptococcus.</title>
        <authorList>
            <person name="Beres S.B."/>
            <person name="Richter E.W."/>
            <person name="Nagiec M.J."/>
            <person name="Sumby P."/>
            <person name="Porcella S.F."/>
            <person name="DeLeo F.R."/>
            <person name="Musser J.M."/>
        </authorList>
    </citation>
    <scope>NUCLEOTIDE SEQUENCE [LARGE SCALE GENOMIC DNA]</scope>
    <source>
        <strain>MGAS2096</strain>
    </source>
</reference>
<name>RECU_STRPB</name>